<protein>
    <recommendedName>
        <fullName>Probable protein phosphatase 2C 6</fullName>
        <shortName>AtPP2C06</shortName>
        <ecNumber>3.1.3.16</ecNumber>
    </recommendedName>
</protein>
<reference key="1">
    <citation type="journal article" date="2000" name="Nature">
        <title>Sequence and analysis of chromosome 1 of the plant Arabidopsis thaliana.</title>
        <authorList>
            <person name="Theologis A."/>
            <person name="Ecker J.R."/>
            <person name="Palm C.J."/>
            <person name="Federspiel N.A."/>
            <person name="Kaul S."/>
            <person name="White O."/>
            <person name="Alonso J."/>
            <person name="Altafi H."/>
            <person name="Araujo R."/>
            <person name="Bowman C.L."/>
            <person name="Brooks S.Y."/>
            <person name="Buehler E."/>
            <person name="Chan A."/>
            <person name="Chao Q."/>
            <person name="Chen H."/>
            <person name="Cheuk R.F."/>
            <person name="Chin C.W."/>
            <person name="Chung M.K."/>
            <person name="Conn L."/>
            <person name="Conway A.B."/>
            <person name="Conway A.R."/>
            <person name="Creasy T.H."/>
            <person name="Dewar K."/>
            <person name="Dunn P."/>
            <person name="Etgu P."/>
            <person name="Feldblyum T.V."/>
            <person name="Feng J.-D."/>
            <person name="Fong B."/>
            <person name="Fujii C.Y."/>
            <person name="Gill J.E."/>
            <person name="Goldsmith A.D."/>
            <person name="Haas B."/>
            <person name="Hansen N.F."/>
            <person name="Hughes B."/>
            <person name="Huizar L."/>
            <person name="Hunter J.L."/>
            <person name="Jenkins J."/>
            <person name="Johnson-Hopson C."/>
            <person name="Khan S."/>
            <person name="Khaykin E."/>
            <person name="Kim C.J."/>
            <person name="Koo H.L."/>
            <person name="Kremenetskaia I."/>
            <person name="Kurtz D.B."/>
            <person name="Kwan A."/>
            <person name="Lam B."/>
            <person name="Langin-Hooper S."/>
            <person name="Lee A."/>
            <person name="Lee J.M."/>
            <person name="Lenz C.A."/>
            <person name="Li J.H."/>
            <person name="Li Y.-P."/>
            <person name="Lin X."/>
            <person name="Liu S.X."/>
            <person name="Liu Z.A."/>
            <person name="Luros J.S."/>
            <person name="Maiti R."/>
            <person name="Marziali A."/>
            <person name="Militscher J."/>
            <person name="Miranda M."/>
            <person name="Nguyen M."/>
            <person name="Nierman W.C."/>
            <person name="Osborne B.I."/>
            <person name="Pai G."/>
            <person name="Peterson J."/>
            <person name="Pham P.K."/>
            <person name="Rizzo M."/>
            <person name="Rooney T."/>
            <person name="Rowley D."/>
            <person name="Sakano H."/>
            <person name="Salzberg S.L."/>
            <person name="Schwartz J.R."/>
            <person name="Shinn P."/>
            <person name="Southwick A.M."/>
            <person name="Sun H."/>
            <person name="Tallon L.J."/>
            <person name="Tambunga G."/>
            <person name="Toriumi M.J."/>
            <person name="Town C.D."/>
            <person name="Utterback T."/>
            <person name="Van Aken S."/>
            <person name="Vaysberg M."/>
            <person name="Vysotskaia V.S."/>
            <person name="Walker M."/>
            <person name="Wu D."/>
            <person name="Yu G."/>
            <person name="Fraser C.M."/>
            <person name="Venter J.C."/>
            <person name="Davis R.W."/>
        </authorList>
    </citation>
    <scope>NUCLEOTIDE SEQUENCE [LARGE SCALE GENOMIC DNA]</scope>
    <source>
        <strain>cv. Columbia</strain>
    </source>
</reference>
<reference key="2">
    <citation type="journal article" date="2017" name="Plant J.">
        <title>Araport11: a complete reannotation of the Arabidopsis thaliana reference genome.</title>
        <authorList>
            <person name="Cheng C.Y."/>
            <person name="Krishnakumar V."/>
            <person name="Chan A.P."/>
            <person name="Thibaud-Nissen F."/>
            <person name="Schobel S."/>
            <person name="Town C.D."/>
        </authorList>
    </citation>
    <scope>GENOME REANNOTATION</scope>
    <source>
        <strain>cv. Columbia</strain>
    </source>
</reference>
<reference key="3">
    <citation type="journal article" date="2008" name="BMC Genomics">
        <title>Genome-wide and expression analysis of protein phosphatase 2C in rice and Arabidopsis.</title>
        <authorList>
            <person name="Xue T."/>
            <person name="Wang D."/>
            <person name="Zhang S."/>
            <person name="Ehlting J."/>
            <person name="Ni F."/>
            <person name="Jacab S."/>
            <person name="Zheng C."/>
            <person name="Zhong Y."/>
        </authorList>
    </citation>
    <scope>GENE FAMILY</scope>
    <scope>NOMENCLATURE</scope>
</reference>
<gene>
    <name type="ordered locus">At1g16220</name>
    <name type="ORF">F3O9.3</name>
</gene>
<organism>
    <name type="scientific">Arabidopsis thaliana</name>
    <name type="common">Mouse-ear cress</name>
    <dbReference type="NCBI Taxonomy" id="3702"/>
    <lineage>
        <taxon>Eukaryota</taxon>
        <taxon>Viridiplantae</taxon>
        <taxon>Streptophyta</taxon>
        <taxon>Embryophyta</taxon>
        <taxon>Tracheophyta</taxon>
        <taxon>Spermatophyta</taxon>
        <taxon>Magnoliopsida</taxon>
        <taxon>eudicotyledons</taxon>
        <taxon>Gunneridae</taxon>
        <taxon>Pentapetalae</taxon>
        <taxon>rosids</taxon>
        <taxon>malvids</taxon>
        <taxon>Brassicales</taxon>
        <taxon>Brassicaceae</taxon>
        <taxon>Camelineae</taxon>
        <taxon>Arabidopsis</taxon>
    </lineage>
</organism>
<sequence length="491" mass="54353">MGLCHSKIDKTTRKETGATSTATTTVERQSSGRLRRPRDLYSGGEISEIQQVVGRLVGNGSSEIACLYTQQGKKGTNQDAMLVWENFCSRSDTVLCGVFDGHGPFGHMVSKRVRDMLPFTLSTQLKTTSGTEQSSSKNGLNSAPTCVDEEQWCELQLCEKDEKLFPEMYLPLKRALLKTCQQMDKELKMHPTINCFCSGTTSVTVIKQGKDLVVGNIGDSRAVLATRDQDNALVAVQLTIDLKPDLPSESARIHRCKGRVFALQDEPEVARVWLPNSDSPGLAMARAFGDFCLKDYGLISVPDINYHRLTERDQYIILATDGVWDVLSNKEAVDIVASAPSRDTAARAVVDTAVRAWRLKYPTSKNDDCAVVCLFLEDTSAGGTVEVSETVNHSHEESTESVTITSSKDADKKEEASTETNETVPVWEIKEEKTPESCRIESKKTTLAECISVKDDEEWSALEGLTRVNSLLSIPRFFSGELRSSSWRKWL</sequence>
<keyword id="KW-0378">Hydrolase</keyword>
<keyword id="KW-0460">Magnesium</keyword>
<keyword id="KW-0464">Manganese</keyword>
<keyword id="KW-0479">Metal-binding</keyword>
<keyword id="KW-0904">Protein phosphatase</keyword>
<keyword id="KW-1185">Reference proteome</keyword>
<accession>Q9SA22</accession>
<dbReference type="EC" id="3.1.3.16"/>
<dbReference type="EMBL" id="AC006341">
    <property type="protein sequence ID" value="AAD34674.1"/>
    <property type="molecule type" value="Genomic_DNA"/>
</dbReference>
<dbReference type="EMBL" id="CP002684">
    <property type="protein sequence ID" value="AEE29420.1"/>
    <property type="molecule type" value="Genomic_DNA"/>
</dbReference>
<dbReference type="PIR" id="B86297">
    <property type="entry name" value="B86297"/>
</dbReference>
<dbReference type="RefSeq" id="NP_173072.1">
    <property type="nucleotide sequence ID" value="NM_101488.2"/>
</dbReference>
<dbReference type="SMR" id="Q9SA22"/>
<dbReference type="FunCoup" id="Q9SA22">
    <property type="interactions" value="1196"/>
</dbReference>
<dbReference type="iPTMnet" id="Q9SA22"/>
<dbReference type="PaxDb" id="3702-AT1G16220.1"/>
<dbReference type="ProteomicsDB" id="248792"/>
<dbReference type="EnsemblPlants" id="AT1G16220.1">
    <property type="protein sequence ID" value="AT1G16220.1"/>
    <property type="gene ID" value="AT1G16220"/>
</dbReference>
<dbReference type="GeneID" id="838190"/>
<dbReference type="Gramene" id="AT1G16220.1">
    <property type="protein sequence ID" value="AT1G16220.1"/>
    <property type="gene ID" value="AT1G16220"/>
</dbReference>
<dbReference type="KEGG" id="ath:AT1G16220"/>
<dbReference type="Araport" id="AT1G16220"/>
<dbReference type="TAIR" id="AT1G16220"/>
<dbReference type="eggNOG" id="KOG0698">
    <property type="taxonomic scope" value="Eukaryota"/>
</dbReference>
<dbReference type="HOGENOM" id="CLU_013173_6_0_1"/>
<dbReference type="InParanoid" id="Q9SA22"/>
<dbReference type="OMA" id="SARIHRC"/>
<dbReference type="PhylomeDB" id="Q9SA22"/>
<dbReference type="PRO" id="PR:Q9SA22"/>
<dbReference type="Proteomes" id="UP000006548">
    <property type="component" value="Chromosome 1"/>
</dbReference>
<dbReference type="ExpressionAtlas" id="Q9SA22">
    <property type="expression patterns" value="baseline and differential"/>
</dbReference>
<dbReference type="GO" id="GO:0046872">
    <property type="term" value="F:metal ion binding"/>
    <property type="evidence" value="ECO:0007669"/>
    <property type="project" value="UniProtKB-KW"/>
</dbReference>
<dbReference type="GO" id="GO:0004722">
    <property type="term" value="F:protein serine/threonine phosphatase activity"/>
    <property type="evidence" value="ECO:0007669"/>
    <property type="project" value="UniProtKB-EC"/>
</dbReference>
<dbReference type="CDD" id="cd00143">
    <property type="entry name" value="PP2Cc"/>
    <property type="match status" value="1"/>
</dbReference>
<dbReference type="FunFam" id="3.60.40.10:FF:000024">
    <property type="entry name" value="probable protein phosphatase 2C 33"/>
    <property type="match status" value="1"/>
</dbReference>
<dbReference type="Gene3D" id="3.60.40.10">
    <property type="entry name" value="PPM-type phosphatase domain"/>
    <property type="match status" value="1"/>
</dbReference>
<dbReference type="InterPro" id="IPR015655">
    <property type="entry name" value="PP2C"/>
</dbReference>
<dbReference type="InterPro" id="IPR036457">
    <property type="entry name" value="PPM-type-like_dom_sf"/>
</dbReference>
<dbReference type="InterPro" id="IPR001932">
    <property type="entry name" value="PPM-type_phosphatase-like_dom"/>
</dbReference>
<dbReference type="PANTHER" id="PTHR47992">
    <property type="entry name" value="PROTEIN PHOSPHATASE"/>
    <property type="match status" value="1"/>
</dbReference>
<dbReference type="Pfam" id="PF00481">
    <property type="entry name" value="PP2C"/>
    <property type="match status" value="1"/>
</dbReference>
<dbReference type="SMART" id="SM00332">
    <property type="entry name" value="PP2Cc"/>
    <property type="match status" value="1"/>
</dbReference>
<dbReference type="SUPFAM" id="SSF81606">
    <property type="entry name" value="PP2C-like"/>
    <property type="match status" value="1"/>
</dbReference>
<dbReference type="PROSITE" id="PS51746">
    <property type="entry name" value="PPM_2"/>
    <property type="match status" value="1"/>
</dbReference>
<proteinExistence type="evidence at transcript level"/>
<comment type="catalytic activity">
    <reaction>
        <text>O-phospho-L-seryl-[protein] + H2O = L-seryl-[protein] + phosphate</text>
        <dbReference type="Rhea" id="RHEA:20629"/>
        <dbReference type="Rhea" id="RHEA-COMP:9863"/>
        <dbReference type="Rhea" id="RHEA-COMP:11604"/>
        <dbReference type="ChEBI" id="CHEBI:15377"/>
        <dbReference type="ChEBI" id="CHEBI:29999"/>
        <dbReference type="ChEBI" id="CHEBI:43474"/>
        <dbReference type="ChEBI" id="CHEBI:83421"/>
        <dbReference type="EC" id="3.1.3.16"/>
    </reaction>
</comment>
<comment type="catalytic activity">
    <reaction>
        <text>O-phospho-L-threonyl-[protein] + H2O = L-threonyl-[protein] + phosphate</text>
        <dbReference type="Rhea" id="RHEA:47004"/>
        <dbReference type="Rhea" id="RHEA-COMP:11060"/>
        <dbReference type="Rhea" id="RHEA-COMP:11605"/>
        <dbReference type="ChEBI" id="CHEBI:15377"/>
        <dbReference type="ChEBI" id="CHEBI:30013"/>
        <dbReference type="ChEBI" id="CHEBI:43474"/>
        <dbReference type="ChEBI" id="CHEBI:61977"/>
        <dbReference type="EC" id="3.1.3.16"/>
    </reaction>
</comment>
<comment type="cofactor">
    <cofactor evidence="1">
        <name>Mg(2+)</name>
        <dbReference type="ChEBI" id="CHEBI:18420"/>
    </cofactor>
    <cofactor evidence="1">
        <name>Mn(2+)</name>
        <dbReference type="ChEBI" id="CHEBI:29035"/>
    </cofactor>
    <text evidence="1">Binds 2 magnesium or manganese ions per subunit.</text>
</comment>
<comment type="similarity">
    <text evidence="4">Belongs to the PP2C family.</text>
</comment>
<feature type="chain" id="PRO_0000367938" description="Probable protein phosphatase 2C 6">
    <location>
        <begin position="1"/>
        <end position="491"/>
    </location>
</feature>
<feature type="domain" description="PPM-type phosphatase" evidence="2">
    <location>
        <begin position="64"/>
        <end position="376"/>
    </location>
</feature>
<feature type="region of interest" description="Disordered" evidence="3">
    <location>
        <begin position="1"/>
        <end position="39"/>
    </location>
</feature>
<feature type="region of interest" description="Disordered" evidence="3">
    <location>
        <begin position="391"/>
        <end position="422"/>
    </location>
</feature>
<feature type="compositionally biased region" description="Basic and acidic residues" evidence="3">
    <location>
        <begin position="1"/>
        <end position="16"/>
    </location>
</feature>
<feature type="compositionally biased region" description="Low complexity" evidence="3">
    <location>
        <begin position="17"/>
        <end position="28"/>
    </location>
</feature>
<feature type="binding site" evidence="1">
    <location>
        <position position="100"/>
    </location>
    <ligand>
        <name>Mn(2+)</name>
        <dbReference type="ChEBI" id="CHEBI:29035"/>
        <label>1</label>
    </ligand>
</feature>
<feature type="binding site" evidence="1">
    <location>
        <position position="100"/>
    </location>
    <ligand>
        <name>Mn(2+)</name>
        <dbReference type="ChEBI" id="CHEBI:29035"/>
        <label>2</label>
    </ligand>
</feature>
<feature type="binding site" evidence="1">
    <location>
        <position position="101"/>
    </location>
    <ligand>
        <name>Mn(2+)</name>
        <dbReference type="ChEBI" id="CHEBI:29035"/>
        <label>1</label>
    </ligand>
</feature>
<feature type="binding site" evidence="1">
    <location>
        <position position="321"/>
    </location>
    <ligand>
        <name>Mn(2+)</name>
        <dbReference type="ChEBI" id="CHEBI:29035"/>
        <label>2</label>
    </ligand>
</feature>
<feature type="binding site" evidence="1">
    <location>
        <position position="367"/>
    </location>
    <ligand>
        <name>Mn(2+)</name>
        <dbReference type="ChEBI" id="CHEBI:29035"/>
        <label>2</label>
    </ligand>
</feature>
<name>P2C06_ARATH</name>
<evidence type="ECO:0000250" key="1"/>
<evidence type="ECO:0000255" key="2">
    <source>
        <dbReference type="PROSITE-ProRule" id="PRU01082"/>
    </source>
</evidence>
<evidence type="ECO:0000256" key="3">
    <source>
        <dbReference type="SAM" id="MobiDB-lite"/>
    </source>
</evidence>
<evidence type="ECO:0000305" key="4"/>